<reference key="1">
    <citation type="submission" date="1997-08" db="EMBL/GenBank/DDBJ databases">
        <title>Nucleotide sequence of the 300-304 chromosomal segment of Bacillus subtilis.</title>
        <authorList>
            <person name="Lazarevic V."/>
            <person name="Soldo B."/>
            <person name="Rivolta C."/>
            <person name="Reynolds S."/>
            <person name="Mauel C."/>
            <person name="Karamata D."/>
        </authorList>
    </citation>
    <scope>NUCLEOTIDE SEQUENCE [GENOMIC DNA]</scope>
</reference>
<reference key="2">
    <citation type="journal article" date="1997" name="Nature">
        <title>The complete genome sequence of the Gram-positive bacterium Bacillus subtilis.</title>
        <authorList>
            <person name="Kunst F."/>
            <person name="Ogasawara N."/>
            <person name="Moszer I."/>
            <person name="Albertini A.M."/>
            <person name="Alloni G."/>
            <person name="Azevedo V."/>
            <person name="Bertero M.G."/>
            <person name="Bessieres P."/>
            <person name="Bolotin A."/>
            <person name="Borchert S."/>
            <person name="Borriss R."/>
            <person name="Boursier L."/>
            <person name="Brans A."/>
            <person name="Braun M."/>
            <person name="Brignell S.C."/>
            <person name="Bron S."/>
            <person name="Brouillet S."/>
            <person name="Bruschi C.V."/>
            <person name="Caldwell B."/>
            <person name="Capuano V."/>
            <person name="Carter N.M."/>
            <person name="Choi S.-K."/>
            <person name="Codani J.-J."/>
            <person name="Connerton I.F."/>
            <person name="Cummings N.J."/>
            <person name="Daniel R.A."/>
            <person name="Denizot F."/>
            <person name="Devine K.M."/>
            <person name="Duesterhoeft A."/>
            <person name="Ehrlich S.D."/>
            <person name="Emmerson P.T."/>
            <person name="Entian K.-D."/>
            <person name="Errington J."/>
            <person name="Fabret C."/>
            <person name="Ferrari E."/>
            <person name="Foulger D."/>
            <person name="Fritz C."/>
            <person name="Fujita M."/>
            <person name="Fujita Y."/>
            <person name="Fuma S."/>
            <person name="Galizzi A."/>
            <person name="Galleron N."/>
            <person name="Ghim S.-Y."/>
            <person name="Glaser P."/>
            <person name="Goffeau A."/>
            <person name="Golightly E.J."/>
            <person name="Grandi G."/>
            <person name="Guiseppi G."/>
            <person name="Guy B.J."/>
            <person name="Haga K."/>
            <person name="Haiech J."/>
            <person name="Harwood C.R."/>
            <person name="Henaut A."/>
            <person name="Hilbert H."/>
            <person name="Holsappel S."/>
            <person name="Hosono S."/>
            <person name="Hullo M.-F."/>
            <person name="Itaya M."/>
            <person name="Jones L.-M."/>
            <person name="Joris B."/>
            <person name="Karamata D."/>
            <person name="Kasahara Y."/>
            <person name="Klaerr-Blanchard M."/>
            <person name="Klein C."/>
            <person name="Kobayashi Y."/>
            <person name="Koetter P."/>
            <person name="Koningstein G."/>
            <person name="Krogh S."/>
            <person name="Kumano M."/>
            <person name="Kurita K."/>
            <person name="Lapidus A."/>
            <person name="Lardinois S."/>
            <person name="Lauber J."/>
            <person name="Lazarevic V."/>
            <person name="Lee S.-M."/>
            <person name="Levine A."/>
            <person name="Liu H."/>
            <person name="Masuda S."/>
            <person name="Mauel C."/>
            <person name="Medigue C."/>
            <person name="Medina N."/>
            <person name="Mellado R.P."/>
            <person name="Mizuno M."/>
            <person name="Moestl D."/>
            <person name="Nakai S."/>
            <person name="Noback M."/>
            <person name="Noone D."/>
            <person name="O'Reilly M."/>
            <person name="Ogawa K."/>
            <person name="Ogiwara A."/>
            <person name="Oudega B."/>
            <person name="Park S.-H."/>
            <person name="Parro V."/>
            <person name="Pohl T.M."/>
            <person name="Portetelle D."/>
            <person name="Porwollik S."/>
            <person name="Prescott A.M."/>
            <person name="Presecan E."/>
            <person name="Pujic P."/>
            <person name="Purnelle B."/>
            <person name="Rapoport G."/>
            <person name="Rey M."/>
            <person name="Reynolds S."/>
            <person name="Rieger M."/>
            <person name="Rivolta C."/>
            <person name="Rocha E."/>
            <person name="Roche B."/>
            <person name="Rose M."/>
            <person name="Sadaie Y."/>
            <person name="Sato T."/>
            <person name="Scanlan E."/>
            <person name="Schleich S."/>
            <person name="Schroeter R."/>
            <person name="Scoffone F."/>
            <person name="Sekiguchi J."/>
            <person name="Sekowska A."/>
            <person name="Seror S.J."/>
            <person name="Serror P."/>
            <person name="Shin B.-S."/>
            <person name="Soldo B."/>
            <person name="Sorokin A."/>
            <person name="Tacconi E."/>
            <person name="Takagi T."/>
            <person name="Takahashi H."/>
            <person name="Takemaru K."/>
            <person name="Takeuchi M."/>
            <person name="Tamakoshi A."/>
            <person name="Tanaka T."/>
            <person name="Terpstra P."/>
            <person name="Tognoni A."/>
            <person name="Tosato V."/>
            <person name="Uchiyama S."/>
            <person name="Vandenbol M."/>
            <person name="Vannier F."/>
            <person name="Vassarotti A."/>
            <person name="Viari A."/>
            <person name="Wambutt R."/>
            <person name="Wedler E."/>
            <person name="Wedler H."/>
            <person name="Weitzenegger T."/>
            <person name="Winters P."/>
            <person name="Wipat A."/>
            <person name="Yamamoto H."/>
            <person name="Yamane K."/>
            <person name="Yasumoto K."/>
            <person name="Yata K."/>
            <person name="Yoshida K."/>
            <person name="Yoshikawa H.-F."/>
            <person name="Zumstein E."/>
            <person name="Yoshikawa H."/>
            <person name="Danchin A."/>
        </authorList>
    </citation>
    <scope>NUCLEOTIDE SEQUENCE [LARGE SCALE GENOMIC DNA]</scope>
    <source>
        <strain>168</strain>
    </source>
</reference>
<comment type="function">
    <text evidence="1">Required for the first step of histidine biosynthesis. May allow the feedback regulation of ATP phosphoribosyltransferase activity by histidine (By similarity).</text>
</comment>
<comment type="pathway">
    <text>Amino-acid biosynthesis; L-histidine biosynthesis; L-histidine from 5-phospho-alpha-D-ribose 1-diphosphate: step 1/9.</text>
</comment>
<comment type="subunit">
    <text evidence="1">Heteromultimer composed of HisG and HisZ subunits.</text>
</comment>
<comment type="subcellular location">
    <subcellularLocation>
        <location evidence="1">Cytoplasm</location>
    </subcellularLocation>
</comment>
<comment type="miscellaneous">
    <text>This function is generally fulfilled by the C-terminal part of HisG, which is missing in some bacteria such as this one.</text>
</comment>
<comment type="similarity">
    <text evidence="2">Belongs to the class-II aminoacyl-tRNA synthetase family. HisZ subfamily.</text>
</comment>
<keyword id="KW-0028">Amino-acid biosynthesis</keyword>
<keyword id="KW-0963">Cytoplasm</keyword>
<keyword id="KW-0368">Histidine biosynthesis</keyword>
<keyword id="KW-1185">Reference proteome</keyword>
<gene>
    <name type="primary">hisZ</name>
    <name type="ordered locus">BSU34930</name>
</gene>
<sequence>MFMFEKPHGMRDTLPGLYETKKKVRRSLTDLIDKWGYQFMETPTLEFYDTVGVQSAIEEQQLFKLLDQDGKTLVLRPDMTGPIARVAASKLLKHGHPLRVGYAANVFRAQEREGGRPAEFEQVGVELIGDGTTSADAEVIALVVGALKNAGLASFKIAIGHAGIADALFVEVLGNVERADVLRRFLYEKNYVGYREHVKSLPLSSIDKSRLLELLELRGGIEVCGRAEEIVDSAQGKSVVDELKALWDILEDYGCTENVRLDLNMVSHMSYYTGILFEVYAENVGFVIGSGGRYNKLLGHFDSPAPATGFGLRIDRLIEALHMKDEPCEIDAVIFSKEQRAQAIAYANEERMKGNKVVLQDLSGIENIDQMTKSFANVTYFIGARKEEQNG</sequence>
<proteinExistence type="inferred from homology"/>
<dbReference type="EMBL" id="AF017113">
    <property type="protein sequence ID" value="AAC67293.1"/>
    <property type="molecule type" value="Genomic_DNA"/>
</dbReference>
<dbReference type="EMBL" id="AL009126">
    <property type="protein sequence ID" value="CAB15498.1"/>
    <property type="molecule type" value="Genomic_DNA"/>
</dbReference>
<dbReference type="PIR" id="H69641">
    <property type="entry name" value="H69641"/>
</dbReference>
<dbReference type="RefSeq" id="NP_391373.1">
    <property type="nucleotide sequence ID" value="NC_000964.3"/>
</dbReference>
<dbReference type="RefSeq" id="WP_003244441.1">
    <property type="nucleotide sequence ID" value="NZ_OZ025638.1"/>
</dbReference>
<dbReference type="SMR" id="O34459"/>
<dbReference type="FunCoup" id="O34459">
    <property type="interactions" value="144"/>
</dbReference>
<dbReference type="STRING" id="224308.BSU34930"/>
<dbReference type="PaxDb" id="224308-BSU34930"/>
<dbReference type="DNASU" id="936602"/>
<dbReference type="EnsemblBacteria" id="CAB15498">
    <property type="protein sequence ID" value="CAB15498"/>
    <property type="gene ID" value="BSU_34930"/>
</dbReference>
<dbReference type="GeneID" id="936602"/>
<dbReference type="KEGG" id="bsu:BSU34930"/>
<dbReference type="PATRIC" id="fig|224308.179.peg.3781"/>
<dbReference type="eggNOG" id="COG3705">
    <property type="taxonomic scope" value="Bacteria"/>
</dbReference>
<dbReference type="InParanoid" id="O34459"/>
<dbReference type="OrthoDB" id="9800814at2"/>
<dbReference type="PhylomeDB" id="O34459"/>
<dbReference type="BioCyc" id="BSUB:BSU34930-MONOMER"/>
<dbReference type="UniPathway" id="UPA00031">
    <property type="reaction ID" value="UER00006"/>
</dbReference>
<dbReference type="Proteomes" id="UP000001570">
    <property type="component" value="Chromosome"/>
</dbReference>
<dbReference type="GO" id="GO:0005737">
    <property type="term" value="C:cytoplasm"/>
    <property type="evidence" value="ECO:0007669"/>
    <property type="project" value="UniProtKB-SubCell"/>
</dbReference>
<dbReference type="GO" id="GO:0140096">
    <property type="term" value="F:catalytic activity, acting on a protein"/>
    <property type="evidence" value="ECO:0007669"/>
    <property type="project" value="UniProtKB-ARBA"/>
</dbReference>
<dbReference type="GO" id="GO:0004821">
    <property type="term" value="F:histidine-tRNA ligase activity"/>
    <property type="evidence" value="ECO:0000318"/>
    <property type="project" value="GO_Central"/>
</dbReference>
<dbReference type="GO" id="GO:0016740">
    <property type="term" value="F:transferase activity"/>
    <property type="evidence" value="ECO:0007669"/>
    <property type="project" value="UniProtKB-ARBA"/>
</dbReference>
<dbReference type="GO" id="GO:0006427">
    <property type="term" value="P:histidyl-tRNA aminoacylation"/>
    <property type="evidence" value="ECO:0000318"/>
    <property type="project" value="GO_Central"/>
</dbReference>
<dbReference type="GO" id="GO:0000105">
    <property type="term" value="P:L-histidine biosynthetic process"/>
    <property type="evidence" value="ECO:0007669"/>
    <property type="project" value="UniProtKB-UniRule"/>
</dbReference>
<dbReference type="CDD" id="cd00773">
    <property type="entry name" value="HisRS-like_core"/>
    <property type="match status" value="1"/>
</dbReference>
<dbReference type="FunFam" id="3.40.50.12590:FF:000001">
    <property type="entry name" value="ATP phosphoribosyltransferase regulatory subunit"/>
    <property type="match status" value="1"/>
</dbReference>
<dbReference type="Gene3D" id="3.40.50.12590">
    <property type="match status" value="1"/>
</dbReference>
<dbReference type="Gene3D" id="3.30.930.10">
    <property type="entry name" value="Bira Bifunctional Protein, Domain 2"/>
    <property type="match status" value="1"/>
</dbReference>
<dbReference type="HAMAP" id="MF_00125">
    <property type="entry name" value="HisZ"/>
    <property type="match status" value="1"/>
</dbReference>
<dbReference type="InterPro" id="IPR006195">
    <property type="entry name" value="aa-tRNA-synth_II"/>
</dbReference>
<dbReference type="InterPro" id="IPR045864">
    <property type="entry name" value="aa-tRNA-synth_II/BPL/LPL"/>
</dbReference>
<dbReference type="InterPro" id="IPR041715">
    <property type="entry name" value="HisRS-like_core"/>
</dbReference>
<dbReference type="InterPro" id="IPR004516">
    <property type="entry name" value="HisRS/HisZ"/>
</dbReference>
<dbReference type="InterPro" id="IPR004517">
    <property type="entry name" value="HisZ"/>
</dbReference>
<dbReference type="InterPro" id="IPR053846">
    <property type="entry name" value="HisZ-C"/>
</dbReference>
<dbReference type="NCBIfam" id="TIGR00443">
    <property type="entry name" value="hisZ_biosyn_reg"/>
    <property type="match status" value="1"/>
</dbReference>
<dbReference type="NCBIfam" id="NF008941">
    <property type="entry name" value="PRK12292.2-4"/>
    <property type="match status" value="1"/>
</dbReference>
<dbReference type="PANTHER" id="PTHR43707:SF1">
    <property type="entry name" value="HISTIDINE--TRNA LIGASE, MITOCHONDRIAL-RELATED"/>
    <property type="match status" value="1"/>
</dbReference>
<dbReference type="PANTHER" id="PTHR43707">
    <property type="entry name" value="HISTIDYL-TRNA SYNTHETASE"/>
    <property type="match status" value="1"/>
</dbReference>
<dbReference type="Pfam" id="PF21996">
    <property type="entry name" value="HisZ-like"/>
    <property type="match status" value="1"/>
</dbReference>
<dbReference type="Pfam" id="PF13393">
    <property type="entry name" value="tRNA-synt_His"/>
    <property type="match status" value="1"/>
</dbReference>
<dbReference type="PIRSF" id="PIRSF001549">
    <property type="entry name" value="His-tRNA_synth"/>
    <property type="match status" value="1"/>
</dbReference>
<dbReference type="SUPFAM" id="SSF55681">
    <property type="entry name" value="Class II aaRS and biotin synthetases"/>
    <property type="match status" value="1"/>
</dbReference>
<dbReference type="PROSITE" id="PS50862">
    <property type="entry name" value="AA_TRNA_LIGASE_II"/>
    <property type="match status" value="1"/>
</dbReference>
<organism>
    <name type="scientific">Bacillus subtilis (strain 168)</name>
    <dbReference type="NCBI Taxonomy" id="224308"/>
    <lineage>
        <taxon>Bacteria</taxon>
        <taxon>Bacillati</taxon>
        <taxon>Bacillota</taxon>
        <taxon>Bacilli</taxon>
        <taxon>Bacillales</taxon>
        <taxon>Bacillaceae</taxon>
        <taxon>Bacillus</taxon>
    </lineage>
</organism>
<feature type="chain" id="PRO_0000171026" description="ATP phosphoribosyltransferase regulatory subunit">
    <location>
        <begin position="1"/>
        <end position="391"/>
    </location>
</feature>
<evidence type="ECO:0000250" key="1"/>
<evidence type="ECO:0000305" key="2"/>
<accession>O34459</accession>
<protein>
    <recommendedName>
        <fullName>ATP phosphoribosyltransferase regulatory subunit</fullName>
    </recommendedName>
</protein>
<name>HISZ_BACSU</name>